<protein>
    <recommendedName>
        <fullName evidence="1">Nucleoid-associated protein VIBHAR_03026</fullName>
    </recommendedName>
</protein>
<gene>
    <name type="ordered locus">VIBHAR_03026</name>
</gene>
<sequence length="332" mass="37797">MSLHLSNVILHQLCKNDQDELVVKLRPASLENDTSTENLVAELHRVFHSKAGKGFGSFQSDSEFQFWLQEMRKGERDFYDFSQISANRLKEELIKYPFADEGILVFAEYQSLATDYLFIGILPMNQSLKVTEGLDIDATDYLDITKMDIAARIDLSSYDTDRESNRYLSYIKGRVGRKVADFFLDFLQADVGLDTKQQNQVLMQAVEDFCADSKLEKQEANEYKKQVYNYCNEQIKSGDEVQISELSGELPPSQDGTSFMDFTKEQGYELEESFPGDRSTVRKLTKYVGAGGGLNISFDSLLLGERIFYDPETDTLTIKGTPPNLKDQLSRN</sequence>
<proteinExistence type="inferred from homology"/>
<dbReference type="EMBL" id="CP000789">
    <property type="protein sequence ID" value="ABU71977.1"/>
    <property type="molecule type" value="Genomic_DNA"/>
</dbReference>
<dbReference type="SMR" id="A7MUJ1"/>
<dbReference type="KEGG" id="vha:VIBHAR_03026"/>
<dbReference type="PATRIC" id="fig|338187.25.peg.3164"/>
<dbReference type="Proteomes" id="UP000008152">
    <property type="component" value="Chromosome I"/>
</dbReference>
<dbReference type="GO" id="GO:0043590">
    <property type="term" value="C:bacterial nucleoid"/>
    <property type="evidence" value="ECO:0007669"/>
    <property type="project" value="TreeGrafter"/>
</dbReference>
<dbReference type="GO" id="GO:0005737">
    <property type="term" value="C:cytoplasm"/>
    <property type="evidence" value="ECO:0007669"/>
    <property type="project" value="UniProtKB-UniRule"/>
</dbReference>
<dbReference type="GO" id="GO:0003690">
    <property type="term" value="F:double-stranded DNA binding"/>
    <property type="evidence" value="ECO:0007669"/>
    <property type="project" value="TreeGrafter"/>
</dbReference>
<dbReference type="GO" id="GO:0003727">
    <property type="term" value="F:single-stranded RNA binding"/>
    <property type="evidence" value="ECO:0007669"/>
    <property type="project" value="TreeGrafter"/>
</dbReference>
<dbReference type="HAMAP" id="MF_00730">
    <property type="entry name" value="NdpA"/>
    <property type="match status" value="1"/>
</dbReference>
<dbReference type="InterPro" id="IPR007358">
    <property type="entry name" value="Nucleoid_associated_NdpA"/>
</dbReference>
<dbReference type="NCBIfam" id="NF001557">
    <property type="entry name" value="PRK00378.1"/>
    <property type="match status" value="1"/>
</dbReference>
<dbReference type="PANTHER" id="PTHR38772">
    <property type="match status" value="1"/>
</dbReference>
<dbReference type="PANTHER" id="PTHR38772:SF1">
    <property type="entry name" value="NUCLEOID-ASSOCIATED PROTEIN YEJK"/>
    <property type="match status" value="1"/>
</dbReference>
<dbReference type="Pfam" id="PF04245">
    <property type="entry name" value="NA37"/>
    <property type="match status" value="1"/>
</dbReference>
<reference key="1">
    <citation type="submission" date="2007-08" db="EMBL/GenBank/DDBJ databases">
        <authorList>
            <consortium name="The Vibrio harveyi Genome Sequencing Project"/>
            <person name="Bassler B."/>
            <person name="Clifton S.W."/>
            <person name="Fulton L."/>
            <person name="Delehaunty K."/>
            <person name="Fronick C."/>
            <person name="Harrison M."/>
            <person name="Markivic C."/>
            <person name="Fulton R."/>
            <person name="Tin-Wollam A.-M."/>
            <person name="Shah N."/>
            <person name="Pepin K."/>
            <person name="Nash W."/>
            <person name="Thiruvilangam P."/>
            <person name="Bhonagiri V."/>
            <person name="Waters C."/>
            <person name="Tu K.C."/>
            <person name="Irgon J."/>
            <person name="Wilson R.K."/>
        </authorList>
    </citation>
    <scope>NUCLEOTIDE SEQUENCE [LARGE SCALE GENOMIC DNA]</scope>
    <source>
        <strain>ATCC BAA-1116 / BB120</strain>
    </source>
</reference>
<feature type="chain" id="PRO_1000045956" description="Nucleoid-associated protein VIBHAR_03026">
    <location>
        <begin position="1"/>
        <end position="332"/>
    </location>
</feature>
<keyword id="KW-0963">Cytoplasm</keyword>
<comment type="subcellular location">
    <subcellularLocation>
        <location evidence="1">Cytoplasm</location>
        <location evidence="1">Nucleoid</location>
    </subcellularLocation>
</comment>
<comment type="similarity">
    <text evidence="1">Belongs to the YejK family.</text>
</comment>
<organism>
    <name type="scientific">Vibrio campbellii (strain ATCC BAA-1116)</name>
    <dbReference type="NCBI Taxonomy" id="2902295"/>
    <lineage>
        <taxon>Bacteria</taxon>
        <taxon>Pseudomonadati</taxon>
        <taxon>Pseudomonadota</taxon>
        <taxon>Gammaproteobacteria</taxon>
        <taxon>Vibrionales</taxon>
        <taxon>Vibrionaceae</taxon>
        <taxon>Vibrio</taxon>
    </lineage>
</organism>
<accession>A7MUJ1</accession>
<name>NDPA_VIBC1</name>
<evidence type="ECO:0000255" key="1">
    <source>
        <dbReference type="HAMAP-Rule" id="MF_00730"/>
    </source>
</evidence>